<name>RS6_STAA3</name>
<evidence type="ECO:0000255" key="1">
    <source>
        <dbReference type="HAMAP-Rule" id="MF_00360"/>
    </source>
</evidence>
<evidence type="ECO:0000305" key="2"/>
<keyword id="KW-0687">Ribonucleoprotein</keyword>
<keyword id="KW-0689">Ribosomal protein</keyword>
<keyword id="KW-0694">RNA-binding</keyword>
<keyword id="KW-0699">rRNA-binding</keyword>
<proteinExistence type="inferred from homology"/>
<dbReference type="EMBL" id="CP000255">
    <property type="protein sequence ID" value="ABD21909.1"/>
    <property type="molecule type" value="Genomic_DNA"/>
</dbReference>
<dbReference type="RefSeq" id="WP_001261460.1">
    <property type="nucleotide sequence ID" value="NZ_CP027476.1"/>
</dbReference>
<dbReference type="SMR" id="Q2FJP8"/>
<dbReference type="GeneID" id="98344691"/>
<dbReference type="KEGG" id="saa:SAUSA300_0366"/>
<dbReference type="HOGENOM" id="CLU_113441_5_3_9"/>
<dbReference type="OMA" id="AYPIQHK"/>
<dbReference type="Proteomes" id="UP000001939">
    <property type="component" value="Chromosome"/>
</dbReference>
<dbReference type="GO" id="GO:0005737">
    <property type="term" value="C:cytoplasm"/>
    <property type="evidence" value="ECO:0007669"/>
    <property type="project" value="UniProtKB-ARBA"/>
</dbReference>
<dbReference type="GO" id="GO:1990904">
    <property type="term" value="C:ribonucleoprotein complex"/>
    <property type="evidence" value="ECO:0007669"/>
    <property type="project" value="UniProtKB-KW"/>
</dbReference>
<dbReference type="GO" id="GO:0005840">
    <property type="term" value="C:ribosome"/>
    <property type="evidence" value="ECO:0007669"/>
    <property type="project" value="UniProtKB-KW"/>
</dbReference>
<dbReference type="GO" id="GO:0070181">
    <property type="term" value="F:small ribosomal subunit rRNA binding"/>
    <property type="evidence" value="ECO:0007669"/>
    <property type="project" value="TreeGrafter"/>
</dbReference>
<dbReference type="GO" id="GO:0003735">
    <property type="term" value="F:structural constituent of ribosome"/>
    <property type="evidence" value="ECO:0007669"/>
    <property type="project" value="InterPro"/>
</dbReference>
<dbReference type="GO" id="GO:0006412">
    <property type="term" value="P:translation"/>
    <property type="evidence" value="ECO:0007669"/>
    <property type="project" value="UniProtKB-UniRule"/>
</dbReference>
<dbReference type="CDD" id="cd00473">
    <property type="entry name" value="bS6"/>
    <property type="match status" value="1"/>
</dbReference>
<dbReference type="FunFam" id="3.30.70.60:FF:000002">
    <property type="entry name" value="30S ribosomal protein S6"/>
    <property type="match status" value="1"/>
</dbReference>
<dbReference type="Gene3D" id="3.30.70.60">
    <property type="match status" value="1"/>
</dbReference>
<dbReference type="HAMAP" id="MF_00360">
    <property type="entry name" value="Ribosomal_bS6"/>
    <property type="match status" value="1"/>
</dbReference>
<dbReference type="InterPro" id="IPR000529">
    <property type="entry name" value="Ribosomal_bS6"/>
</dbReference>
<dbReference type="InterPro" id="IPR020815">
    <property type="entry name" value="Ribosomal_bS6_CS"/>
</dbReference>
<dbReference type="InterPro" id="IPR035980">
    <property type="entry name" value="Ribosomal_bS6_sf"/>
</dbReference>
<dbReference type="InterPro" id="IPR020814">
    <property type="entry name" value="Ribosomal_S6_plastid/chlpt"/>
</dbReference>
<dbReference type="InterPro" id="IPR014717">
    <property type="entry name" value="Transl_elong_EF1B/ribsomal_bS6"/>
</dbReference>
<dbReference type="NCBIfam" id="TIGR00166">
    <property type="entry name" value="S6"/>
    <property type="match status" value="1"/>
</dbReference>
<dbReference type="PANTHER" id="PTHR21011">
    <property type="entry name" value="MITOCHONDRIAL 28S RIBOSOMAL PROTEIN S6"/>
    <property type="match status" value="1"/>
</dbReference>
<dbReference type="PANTHER" id="PTHR21011:SF1">
    <property type="entry name" value="SMALL RIBOSOMAL SUBUNIT PROTEIN BS6M"/>
    <property type="match status" value="1"/>
</dbReference>
<dbReference type="Pfam" id="PF01250">
    <property type="entry name" value="Ribosomal_S6"/>
    <property type="match status" value="1"/>
</dbReference>
<dbReference type="SUPFAM" id="SSF54995">
    <property type="entry name" value="Ribosomal protein S6"/>
    <property type="match status" value="1"/>
</dbReference>
<dbReference type="PROSITE" id="PS01048">
    <property type="entry name" value="RIBOSOMAL_S6"/>
    <property type="match status" value="1"/>
</dbReference>
<organism>
    <name type="scientific">Staphylococcus aureus (strain USA300)</name>
    <dbReference type="NCBI Taxonomy" id="367830"/>
    <lineage>
        <taxon>Bacteria</taxon>
        <taxon>Bacillati</taxon>
        <taxon>Bacillota</taxon>
        <taxon>Bacilli</taxon>
        <taxon>Bacillales</taxon>
        <taxon>Staphylococcaceae</taxon>
        <taxon>Staphylococcus</taxon>
    </lineage>
</organism>
<comment type="function">
    <text evidence="1">Binds together with bS18 to 16S ribosomal RNA.</text>
</comment>
<comment type="similarity">
    <text evidence="1">Belongs to the bacterial ribosomal protein bS6 family.</text>
</comment>
<gene>
    <name evidence="1" type="primary">rpsF</name>
    <name type="ordered locus">SAUSA300_0366</name>
</gene>
<reference key="1">
    <citation type="journal article" date="2006" name="Lancet">
        <title>Complete genome sequence of USA300, an epidemic clone of community-acquired meticillin-resistant Staphylococcus aureus.</title>
        <authorList>
            <person name="Diep B.A."/>
            <person name="Gill S.R."/>
            <person name="Chang R.F."/>
            <person name="Phan T.H."/>
            <person name="Chen J.H."/>
            <person name="Davidson M.G."/>
            <person name="Lin F."/>
            <person name="Lin J."/>
            <person name="Carleton H.A."/>
            <person name="Mongodin E.F."/>
            <person name="Sensabaugh G.F."/>
            <person name="Perdreau-Remington F."/>
        </authorList>
    </citation>
    <scope>NUCLEOTIDE SEQUENCE [LARGE SCALE GENOMIC DNA]</scope>
    <source>
        <strain>USA300</strain>
    </source>
</reference>
<accession>Q2FJP8</accession>
<sequence>MRTYEVMYIVRPNIEEDAKKALVERFNGILATEGAEVLEAKDWGKRRLAYEINDFKDGFYNIVRVKSDNNKATDEFQRLAKISDDIIRYMVIREDEDK</sequence>
<feature type="chain" id="PRO_1000005361" description="Small ribosomal subunit protein bS6">
    <location>
        <begin position="1"/>
        <end position="98"/>
    </location>
</feature>
<protein>
    <recommendedName>
        <fullName evidence="1">Small ribosomal subunit protein bS6</fullName>
    </recommendedName>
    <alternativeName>
        <fullName evidence="2">30S ribosomal protein S6</fullName>
    </alternativeName>
</protein>